<feature type="peptide" id="PRO_0000345046" description="Phenol-soluble modulin alpha 2 peptide">
    <location>
        <begin position="1"/>
        <end position="21"/>
    </location>
</feature>
<reference key="1">
    <citation type="book" date="2006" name="Gram positive pathogens, 2nd edition">
        <title>The Staphylococcus aureus NCTC 8325 genome.</title>
        <editorList>
            <person name="Fischetti V."/>
            <person name="Novick R."/>
            <person name="Ferretti J."/>
            <person name="Portnoy D."/>
            <person name="Rood J."/>
        </editorList>
        <authorList>
            <person name="Gillaspy A.F."/>
            <person name="Worrell V."/>
            <person name="Orvis J."/>
            <person name="Roe B.A."/>
            <person name="Dyer D.W."/>
            <person name="Iandolo J.J."/>
        </authorList>
    </citation>
    <scope>NUCLEOTIDE SEQUENCE [LARGE SCALE GENOMIC DNA]</scope>
    <source>
        <strain>NCTC 8325 / PS 47</strain>
    </source>
</reference>
<name>PSMA2_STAA8</name>
<gene>
    <name type="primary">psmA2</name>
    <name type="ordered locus">SAOUHSC_00411.3</name>
</gene>
<organism>
    <name type="scientific">Staphylococcus aureus (strain NCTC 8325 / PS 47)</name>
    <dbReference type="NCBI Taxonomy" id="93061"/>
    <lineage>
        <taxon>Bacteria</taxon>
        <taxon>Bacillati</taxon>
        <taxon>Bacillota</taxon>
        <taxon>Bacilli</taxon>
        <taxon>Bacillales</taxon>
        <taxon>Staphylococcaceae</taxon>
        <taxon>Staphylococcus</taxon>
    </lineage>
</organism>
<evidence type="ECO:0000250" key="1">
    <source>
        <dbReference type="UniProtKB" id="A9JX06"/>
    </source>
</evidence>
<evidence type="ECO:0000305" key="2"/>
<comment type="function">
    <text evidence="1">Peptide which can recruit, activate and subsequently lyse human neutrophils, thus eliminating the main cellular defense against infection.</text>
</comment>
<comment type="similarity">
    <text evidence="2">Belongs to the phenol-soluble modulin alpha peptides family.</text>
</comment>
<proteinExistence type="inferred from homology"/>
<keyword id="KW-0204">Cytolysis</keyword>
<keyword id="KW-1185">Reference proteome</keyword>
<keyword id="KW-0843">Virulence</keyword>
<accession>P0C7Z3</accession>
<dbReference type="EMBL" id="CP000253">
    <property type="status" value="NOT_ANNOTATED_CDS"/>
    <property type="molecule type" value="Genomic_DNA"/>
</dbReference>
<dbReference type="Proteomes" id="UP000008816">
    <property type="component" value="Chromosome"/>
</dbReference>
<dbReference type="GO" id="GO:0031640">
    <property type="term" value="P:killing of cells of another organism"/>
    <property type="evidence" value="ECO:0007669"/>
    <property type="project" value="UniProtKB-KW"/>
</dbReference>
<dbReference type="InterPro" id="IPR031429">
    <property type="entry name" value="PSM_alpha"/>
</dbReference>
<dbReference type="NCBIfam" id="NF033425">
    <property type="entry name" value="PSM_alpha_1_2"/>
    <property type="match status" value="1"/>
</dbReference>
<dbReference type="Pfam" id="PF17063">
    <property type="entry name" value="PSMalpha"/>
    <property type="match status" value="1"/>
</dbReference>
<protein>
    <recommendedName>
        <fullName>Phenol-soluble modulin alpha 2 peptide</fullName>
    </recommendedName>
</protein>
<sequence length="21" mass="2278">MGIIAGIIKFIKGLIEKFTGK</sequence>